<sequence length="377" mass="42950">MPSAVQLAEKNHEKDSKFAKALHGESYKQTGLKALMSKARDASEVANDGYFKHWDGGVTKEDEDKRLSDYSNLTAHYYNLVTDFYEYGWGSSFHFSRYYTGEAFRQATARHEHFLAHKMQINENMKVLDVGCGVGGPAREICRFTDCSIVGLNNNDYQIERANHYARKYKLDDKLSFVKGDFMQMDFEAESFDAVYAIEATVHAPVLEGVYSEIYKVLKPGGVFGVYEWVMTDKYDDENEEHRKIAYGIEVGDGIPKMYKREVAEKALKSVGFEIEYEADLADKEDDIPWYYPLSGEWKYVQTLSDYFTIFRTSKVGRTITTEAVGLMEKLGLAPKGSKQVTNALEDAAVNLVEGGRQKLFTPMMLYVCRKPANEDI</sequence>
<organism>
    <name type="scientific">Debaryomyces hansenii (strain ATCC 36239 / CBS 767 / BCRC 21394 / JCM 1990 / NBRC 0083 / IGC 2968)</name>
    <name type="common">Yeast</name>
    <name type="synonym">Torulaspora hansenii</name>
    <dbReference type="NCBI Taxonomy" id="284592"/>
    <lineage>
        <taxon>Eukaryota</taxon>
        <taxon>Fungi</taxon>
        <taxon>Dikarya</taxon>
        <taxon>Ascomycota</taxon>
        <taxon>Saccharomycotina</taxon>
        <taxon>Pichiomycetes</taxon>
        <taxon>Debaryomycetaceae</taxon>
        <taxon>Debaryomyces</taxon>
    </lineage>
</organism>
<name>ERG6_DEBHA</name>
<evidence type="ECO:0000250" key="1"/>
<evidence type="ECO:0000255" key="2">
    <source>
        <dbReference type="PROSITE-ProRule" id="PRU01022"/>
    </source>
</evidence>
<comment type="function">
    <text evidence="1">Catalyzes the methyl transfer from S-adenosyl-methionine to the C-24 of zymosterol to form fecosterol.</text>
</comment>
<comment type="catalytic activity">
    <reaction>
        <text>zymosterol + S-adenosyl-L-methionine = fecosterol + S-adenosyl-L-homocysteine + H(+)</text>
        <dbReference type="Rhea" id="RHEA:21128"/>
        <dbReference type="ChEBI" id="CHEBI:15378"/>
        <dbReference type="ChEBI" id="CHEBI:17038"/>
        <dbReference type="ChEBI" id="CHEBI:18252"/>
        <dbReference type="ChEBI" id="CHEBI:57856"/>
        <dbReference type="ChEBI" id="CHEBI:59789"/>
        <dbReference type="EC" id="2.1.1.41"/>
    </reaction>
</comment>
<comment type="pathway">
    <text>Steroid metabolism; ergosterol biosynthesis; ergosterol from zymosterol: step 1/5.</text>
</comment>
<comment type="similarity">
    <text evidence="2">Belongs to the class I-like SAM-binding methyltransferase superfamily. Erg6/SMT family.</text>
</comment>
<accession>Q6BRB7</accession>
<gene>
    <name type="primary">ERG6</name>
    <name type="ordered locus">DEHA2D17622g</name>
</gene>
<feature type="chain" id="PRO_0000124792" description="Sterol 24-C-methyltransferase">
    <location>
        <begin position="1"/>
        <end position="377"/>
    </location>
</feature>
<dbReference type="EC" id="2.1.1.41"/>
<dbReference type="EMBL" id="CR382136">
    <property type="protein sequence ID" value="CAG87427.1"/>
    <property type="molecule type" value="Genomic_DNA"/>
</dbReference>
<dbReference type="RefSeq" id="XP_459253.1">
    <property type="nucleotide sequence ID" value="XM_459253.1"/>
</dbReference>
<dbReference type="SMR" id="Q6BRB7"/>
<dbReference type="FunCoup" id="Q6BRB7">
    <property type="interactions" value="338"/>
</dbReference>
<dbReference type="STRING" id="284592.Q6BRB7"/>
<dbReference type="GeneID" id="2901632"/>
<dbReference type="KEGG" id="dha:DEHA2D17622g"/>
<dbReference type="VEuPathDB" id="FungiDB:DEHA2D17622g"/>
<dbReference type="eggNOG" id="KOG1269">
    <property type="taxonomic scope" value="Eukaryota"/>
</dbReference>
<dbReference type="HOGENOM" id="CLU_039068_5_3_1"/>
<dbReference type="InParanoid" id="Q6BRB7"/>
<dbReference type="OMA" id="AFNKAMH"/>
<dbReference type="OrthoDB" id="540004at2759"/>
<dbReference type="UniPathway" id="UPA00768">
    <property type="reaction ID" value="UER00760"/>
</dbReference>
<dbReference type="Proteomes" id="UP000000599">
    <property type="component" value="Chromosome D"/>
</dbReference>
<dbReference type="GO" id="GO:0005783">
    <property type="term" value="C:endoplasmic reticulum"/>
    <property type="evidence" value="ECO:0007669"/>
    <property type="project" value="TreeGrafter"/>
</dbReference>
<dbReference type="GO" id="GO:0003838">
    <property type="term" value="F:sterol 24-C-methyltransferase activity"/>
    <property type="evidence" value="ECO:0007669"/>
    <property type="project" value="UniProtKB-EC"/>
</dbReference>
<dbReference type="GO" id="GO:0006696">
    <property type="term" value="P:ergosterol biosynthetic process"/>
    <property type="evidence" value="ECO:0007669"/>
    <property type="project" value="EnsemblFungi"/>
</dbReference>
<dbReference type="GO" id="GO:0032259">
    <property type="term" value="P:methylation"/>
    <property type="evidence" value="ECO:0007669"/>
    <property type="project" value="UniProtKB-KW"/>
</dbReference>
<dbReference type="CDD" id="cd02440">
    <property type="entry name" value="AdoMet_MTases"/>
    <property type="match status" value="1"/>
</dbReference>
<dbReference type="FunFam" id="3.40.50.150:FF:000121">
    <property type="entry name" value="Sterol 24-C-methyltransferase"/>
    <property type="match status" value="1"/>
</dbReference>
<dbReference type="Gene3D" id="3.40.50.150">
    <property type="entry name" value="Vaccinia Virus protein VP39"/>
    <property type="match status" value="1"/>
</dbReference>
<dbReference type="InterPro" id="IPR050447">
    <property type="entry name" value="Erg6_SMT_methyltransf"/>
</dbReference>
<dbReference type="InterPro" id="IPR013216">
    <property type="entry name" value="Methyltransf_11"/>
</dbReference>
<dbReference type="InterPro" id="IPR030384">
    <property type="entry name" value="MeTrfase_SMT"/>
</dbReference>
<dbReference type="InterPro" id="IPR029063">
    <property type="entry name" value="SAM-dependent_MTases_sf"/>
</dbReference>
<dbReference type="InterPro" id="IPR013705">
    <property type="entry name" value="Sterol_MeTrfase_C"/>
</dbReference>
<dbReference type="PANTHER" id="PTHR44068:SF1">
    <property type="entry name" value="HYPOTHETICAL LOC100005854"/>
    <property type="match status" value="1"/>
</dbReference>
<dbReference type="PANTHER" id="PTHR44068">
    <property type="entry name" value="ZGC:194242"/>
    <property type="match status" value="1"/>
</dbReference>
<dbReference type="Pfam" id="PF08241">
    <property type="entry name" value="Methyltransf_11"/>
    <property type="match status" value="1"/>
</dbReference>
<dbReference type="Pfam" id="PF08498">
    <property type="entry name" value="Sterol_MT_C"/>
    <property type="match status" value="1"/>
</dbReference>
<dbReference type="SUPFAM" id="SSF53335">
    <property type="entry name" value="S-adenosyl-L-methionine-dependent methyltransferases"/>
    <property type="match status" value="1"/>
</dbReference>
<dbReference type="PROSITE" id="PS51685">
    <property type="entry name" value="SAM_MT_ERG6_SMT"/>
    <property type="match status" value="1"/>
</dbReference>
<reference key="1">
    <citation type="journal article" date="2004" name="Nature">
        <title>Genome evolution in yeasts.</title>
        <authorList>
            <person name="Dujon B."/>
            <person name="Sherman D."/>
            <person name="Fischer G."/>
            <person name="Durrens P."/>
            <person name="Casaregola S."/>
            <person name="Lafontaine I."/>
            <person name="de Montigny J."/>
            <person name="Marck C."/>
            <person name="Neuveglise C."/>
            <person name="Talla E."/>
            <person name="Goffard N."/>
            <person name="Frangeul L."/>
            <person name="Aigle M."/>
            <person name="Anthouard V."/>
            <person name="Babour A."/>
            <person name="Barbe V."/>
            <person name="Barnay S."/>
            <person name="Blanchin S."/>
            <person name="Beckerich J.-M."/>
            <person name="Beyne E."/>
            <person name="Bleykasten C."/>
            <person name="Boisrame A."/>
            <person name="Boyer J."/>
            <person name="Cattolico L."/>
            <person name="Confanioleri F."/>
            <person name="de Daruvar A."/>
            <person name="Despons L."/>
            <person name="Fabre E."/>
            <person name="Fairhead C."/>
            <person name="Ferry-Dumazet H."/>
            <person name="Groppi A."/>
            <person name="Hantraye F."/>
            <person name="Hennequin C."/>
            <person name="Jauniaux N."/>
            <person name="Joyet P."/>
            <person name="Kachouri R."/>
            <person name="Kerrest A."/>
            <person name="Koszul R."/>
            <person name="Lemaire M."/>
            <person name="Lesur I."/>
            <person name="Ma L."/>
            <person name="Muller H."/>
            <person name="Nicaud J.-M."/>
            <person name="Nikolski M."/>
            <person name="Oztas S."/>
            <person name="Ozier-Kalogeropoulos O."/>
            <person name="Pellenz S."/>
            <person name="Potier S."/>
            <person name="Richard G.-F."/>
            <person name="Straub M.-L."/>
            <person name="Suleau A."/>
            <person name="Swennen D."/>
            <person name="Tekaia F."/>
            <person name="Wesolowski-Louvel M."/>
            <person name="Westhof E."/>
            <person name="Wirth B."/>
            <person name="Zeniou-Meyer M."/>
            <person name="Zivanovic Y."/>
            <person name="Bolotin-Fukuhara M."/>
            <person name="Thierry A."/>
            <person name="Bouchier C."/>
            <person name="Caudron B."/>
            <person name="Scarpelli C."/>
            <person name="Gaillardin C."/>
            <person name="Weissenbach J."/>
            <person name="Wincker P."/>
            <person name="Souciet J.-L."/>
        </authorList>
    </citation>
    <scope>NUCLEOTIDE SEQUENCE [LARGE SCALE GENOMIC DNA]</scope>
    <source>
        <strain>ATCC 36239 / CBS 767 / BCRC 21394 / JCM 1990 / NBRC 0083 / IGC 2968</strain>
    </source>
</reference>
<protein>
    <recommendedName>
        <fullName>Sterol 24-C-methyltransferase</fullName>
        <ecNumber>2.1.1.41</ecNumber>
    </recommendedName>
    <alternativeName>
        <fullName>Delta(24)-sterol C-methyltransferase</fullName>
    </alternativeName>
</protein>
<keyword id="KW-0444">Lipid biosynthesis</keyword>
<keyword id="KW-0443">Lipid metabolism</keyword>
<keyword id="KW-0489">Methyltransferase</keyword>
<keyword id="KW-1185">Reference proteome</keyword>
<keyword id="KW-0949">S-adenosyl-L-methionine</keyword>
<keyword id="KW-0752">Steroid biosynthesis</keyword>
<keyword id="KW-0753">Steroid metabolism</keyword>
<keyword id="KW-0756">Sterol biosynthesis</keyword>
<keyword id="KW-1207">Sterol metabolism</keyword>
<keyword id="KW-0808">Transferase</keyword>
<proteinExistence type="inferred from homology"/>